<protein>
    <recommendedName>
        <fullName evidence="1">NAD(P)H-quinone oxidoreductase subunit H, chloroplastic</fullName>
        <ecNumber evidence="1">7.1.1.-</ecNumber>
    </recommendedName>
    <alternativeName>
        <fullName>NAD(P)H dehydrogenase subunit H</fullName>
    </alternativeName>
    <alternativeName>
        <fullName evidence="1">NADH-plastoquinone oxidoreductase 49 kDa subunit</fullName>
    </alternativeName>
    <alternativeName>
        <fullName evidence="1">NADH-plastoquinone oxidoreductase subunit H</fullName>
    </alternativeName>
</protein>
<comment type="function">
    <text evidence="1">NDH shuttles electrons from NAD(P)H:plastoquinone, via FMN and iron-sulfur (Fe-S) centers, to quinones in the photosynthetic chain and possibly in a chloroplast respiratory chain. The immediate electron acceptor for the enzyme in this species is believed to be plastoquinone. Couples the redox reaction to proton translocation, and thus conserves the redox energy in a proton gradient.</text>
</comment>
<comment type="catalytic activity">
    <reaction evidence="1">
        <text>a plastoquinone + NADH + (n+1) H(+)(in) = a plastoquinol + NAD(+) + n H(+)(out)</text>
        <dbReference type="Rhea" id="RHEA:42608"/>
        <dbReference type="Rhea" id="RHEA-COMP:9561"/>
        <dbReference type="Rhea" id="RHEA-COMP:9562"/>
        <dbReference type="ChEBI" id="CHEBI:15378"/>
        <dbReference type="ChEBI" id="CHEBI:17757"/>
        <dbReference type="ChEBI" id="CHEBI:57540"/>
        <dbReference type="ChEBI" id="CHEBI:57945"/>
        <dbReference type="ChEBI" id="CHEBI:62192"/>
    </reaction>
</comment>
<comment type="catalytic activity">
    <reaction evidence="1">
        <text>a plastoquinone + NADPH + (n+1) H(+)(in) = a plastoquinol + NADP(+) + n H(+)(out)</text>
        <dbReference type="Rhea" id="RHEA:42612"/>
        <dbReference type="Rhea" id="RHEA-COMP:9561"/>
        <dbReference type="Rhea" id="RHEA-COMP:9562"/>
        <dbReference type="ChEBI" id="CHEBI:15378"/>
        <dbReference type="ChEBI" id="CHEBI:17757"/>
        <dbReference type="ChEBI" id="CHEBI:57783"/>
        <dbReference type="ChEBI" id="CHEBI:58349"/>
        <dbReference type="ChEBI" id="CHEBI:62192"/>
    </reaction>
</comment>
<comment type="subunit">
    <text evidence="1">NDH is composed of at least 16 different subunits, 5 of which are encoded in the nucleus.</text>
</comment>
<comment type="subcellular location">
    <subcellularLocation>
        <location evidence="1">Plastid</location>
        <location evidence="1">Chloroplast thylakoid membrane</location>
        <topology evidence="1">Peripheral membrane protein</topology>
        <orientation evidence="1">Stromal side</orientation>
    </subcellularLocation>
</comment>
<comment type="similarity">
    <text evidence="1">Belongs to the complex I 49 kDa subunit family.</text>
</comment>
<keyword id="KW-0150">Chloroplast</keyword>
<keyword id="KW-0472">Membrane</keyword>
<keyword id="KW-0520">NAD</keyword>
<keyword id="KW-0521">NADP</keyword>
<keyword id="KW-0934">Plastid</keyword>
<keyword id="KW-0618">Plastoquinone</keyword>
<keyword id="KW-0874">Quinone</keyword>
<keyword id="KW-1185">Reference proteome</keyword>
<keyword id="KW-0793">Thylakoid</keyword>
<keyword id="KW-1278">Translocase</keyword>
<keyword id="KW-0813">Transport</keyword>
<gene>
    <name evidence="1" type="primary">ndhH</name>
    <name type="ordered locus">Poptr_cp085</name>
</gene>
<dbReference type="EC" id="7.1.1.-" evidence="1"/>
<dbReference type="EMBL" id="EF489041">
    <property type="protein sequence ID" value="ABO36767.1"/>
    <property type="molecule type" value="Genomic_DNA"/>
</dbReference>
<dbReference type="RefSeq" id="YP_001109563.1">
    <property type="nucleotide sequence ID" value="NC_009143.1"/>
</dbReference>
<dbReference type="SMR" id="A4GYX2"/>
<dbReference type="FunCoup" id="A4GYX2">
    <property type="interactions" value="13"/>
</dbReference>
<dbReference type="STRING" id="3694.A4GYX2"/>
<dbReference type="GeneID" id="4929746"/>
<dbReference type="KEGG" id="pop:4929746"/>
<dbReference type="InParanoid" id="A4GYX2"/>
<dbReference type="OrthoDB" id="1845069at2759"/>
<dbReference type="Proteomes" id="UP000006729">
    <property type="component" value="Chloroplast"/>
</dbReference>
<dbReference type="ExpressionAtlas" id="A4GYX2">
    <property type="expression patterns" value="differential"/>
</dbReference>
<dbReference type="GO" id="GO:0009535">
    <property type="term" value="C:chloroplast thylakoid membrane"/>
    <property type="evidence" value="ECO:0007669"/>
    <property type="project" value="UniProtKB-SubCell"/>
</dbReference>
<dbReference type="GO" id="GO:0051287">
    <property type="term" value="F:NAD binding"/>
    <property type="evidence" value="ECO:0007669"/>
    <property type="project" value="InterPro"/>
</dbReference>
<dbReference type="GO" id="GO:0016655">
    <property type="term" value="F:oxidoreductase activity, acting on NAD(P)H, quinone or similar compound as acceptor"/>
    <property type="evidence" value="ECO:0007669"/>
    <property type="project" value="UniProtKB-UniRule"/>
</dbReference>
<dbReference type="GO" id="GO:0048038">
    <property type="term" value="F:quinone binding"/>
    <property type="evidence" value="ECO:0007669"/>
    <property type="project" value="UniProtKB-KW"/>
</dbReference>
<dbReference type="GO" id="GO:0019684">
    <property type="term" value="P:photosynthesis, light reaction"/>
    <property type="evidence" value="ECO:0007669"/>
    <property type="project" value="UniProtKB-UniRule"/>
</dbReference>
<dbReference type="FunFam" id="1.10.645.10:FF:000003">
    <property type="entry name" value="NAD(P)H-quinone oxidoreductase subunit H, chloroplastic"/>
    <property type="match status" value="1"/>
</dbReference>
<dbReference type="Gene3D" id="1.10.645.10">
    <property type="entry name" value="Cytochrome-c3 Hydrogenase, chain B"/>
    <property type="match status" value="1"/>
</dbReference>
<dbReference type="HAMAP" id="MF_01358">
    <property type="entry name" value="NDH1_NuoD"/>
    <property type="match status" value="1"/>
</dbReference>
<dbReference type="InterPro" id="IPR001135">
    <property type="entry name" value="NADH_Q_OxRdtase_suD"/>
</dbReference>
<dbReference type="InterPro" id="IPR014029">
    <property type="entry name" value="NADH_UbQ_OxRdtase_49kDa_CS"/>
</dbReference>
<dbReference type="InterPro" id="IPR022885">
    <property type="entry name" value="NDH1_su_D/H"/>
</dbReference>
<dbReference type="InterPro" id="IPR029014">
    <property type="entry name" value="NiFe-Hase_large"/>
</dbReference>
<dbReference type="NCBIfam" id="NF004739">
    <property type="entry name" value="PRK06075.1"/>
    <property type="match status" value="1"/>
</dbReference>
<dbReference type="NCBIfam" id="NF005649">
    <property type="entry name" value="PRK07415.1"/>
    <property type="match status" value="1"/>
</dbReference>
<dbReference type="PANTHER" id="PTHR11993:SF10">
    <property type="entry name" value="NADH DEHYDROGENASE [UBIQUINONE] IRON-SULFUR PROTEIN 2, MITOCHONDRIAL"/>
    <property type="match status" value="1"/>
</dbReference>
<dbReference type="PANTHER" id="PTHR11993">
    <property type="entry name" value="NADH-UBIQUINONE OXIDOREDUCTASE 49 KDA SUBUNIT"/>
    <property type="match status" value="1"/>
</dbReference>
<dbReference type="Pfam" id="PF00346">
    <property type="entry name" value="Complex1_49kDa"/>
    <property type="match status" value="1"/>
</dbReference>
<dbReference type="SUPFAM" id="SSF56762">
    <property type="entry name" value="HydB/Nqo4-like"/>
    <property type="match status" value="1"/>
</dbReference>
<dbReference type="PROSITE" id="PS00535">
    <property type="entry name" value="COMPLEX1_49K"/>
    <property type="match status" value="1"/>
</dbReference>
<proteinExistence type="inferred from homology"/>
<accession>A4GYX2</accession>
<feature type="chain" id="PRO_0000358024" description="NAD(P)H-quinone oxidoreductase subunit H, chloroplastic">
    <location>
        <begin position="1"/>
        <end position="393"/>
    </location>
</feature>
<organism>
    <name type="scientific">Populus trichocarpa</name>
    <name type="common">Western balsam poplar</name>
    <name type="synonym">Populus balsamifera subsp. trichocarpa</name>
    <dbReference type="NCBI Taxonomy" id="3694"/>
    <lineage>
        <taxon>Eukaryota</taxon>
        <taxon>Viridiplantae</taxon>
        <taxon>Streptophyta</taxon>
        <taxon>Embryophyta</taxon>
        <taxon>Tracheophyta</taxon>
        <taxon>Spermatophyta</taxon>
        <taxon>Magnoliopsida</taxon>
        <taxon>eudicotyledons</taxon>
        <taxon>Gunneridae</taxon>
        <taxon>Pentapetalae</taxon>
        <taxon>rosids</taxon>
        <taxon>fabids</taxon>
        <taxon>Malpighiales</taxon>
        <taxon>Salicaceae</taxon>
        <taxon>Saliceae</taxon>
        <taxon>Populus</taxon>
    </lineage>
</organism>
<evidence type="ECO:0000255" key="1">
    <source>
        <dbReference type="HAMAP-Rule" id="MF_01358"/>
    </source>
</evidence>
<sequence>MNVPATRKDFMIVNMGPHHPSMHGVLRLILSLDGEDVIDCEPILGYLHRGMEKIAENRTIIQYLPYVTRWDYLATMFTEAITINGPEQLGNIQVPKRASYIRVIMLELSRIASHLLWLGPFMADIGGQTPFFYIFRERELIYDLFEAATGMRMMHNYFRIGGVAADLPHGWLDKCLDFCDYFLTGVAEYQKLITRNPIFLERVEGIGIVSAEEAINWGLSGPMLRASGVRWDLRKVDHYECYDEFDWGVQWQKEGDSLARYLVRIGEMTESVKIIQQALEGIPGGPYENLETRSFDRERNREWNDFEYRFISKKTSPAFELPKQELYVRVEAPKGELGIFLIGDQSSFPWRWKIRPPGFINLQILPQLIKRMKLADIMTILGSIDIIMGEVDR</sequence>
<reference key="1">
    <citation type="journal article" date="2006" name="Science">
        <title>The genome of black cottonwood, Populus trichocarpa (Torr. &amp; Gray).</title>
        <authorList>
            <person name="Tuskan G.A."/>
            <person name="Difazio S."/>
            <person name="Jansson S."/>
            <person name="Bohlmann J."/>
            <person name="Grigoriev I."/>
            <person name="Hellsten U."/>
            <person name="Putnam N."/>
            <person name="Ralph S."/>
            <person name="Rombauts S."/>
            <person name="Salamov A."/>
            <person name="Schein J."/>
            <person name="Sterck L."/>
            <person name="Aerts A."/>
            <person name="Bhalerao R.R."/>
            <person name="Bhalerao R.P."/>
            <person name="Blaudez D."/>
            <person name="Boerjan W."/>
            <person name="Brun A."/>
            <person name="Brunner A."/>
            <person name="Busov V."/>
            <person name="Campbell M."/>
            <person name="Carlson J."/>
            <person name="Chalot M."/>
            <person name="Chapman J."/>
            <person name="Chen G.-L."/>
            <person name="Cooper D."/>
            <person name="Coutinho P.M."/>
            <person name="Couturier J."/>
            <person name="Covert S."/>
            <person name="Cronk Q."/>
            <person name="Cunningham R."/>
            <person name="Davis J."/>
            <person name="Degroeve S."/>
            <person name="Dejardin A."/>
            <person name="dePamphilis C.W."/>
            <person name="Detter J."/>
            <person name="Dirks B."/>
            <person name="Dubchak I."/>
            <person name="Duplessis S."/>
            <person name="Ehlting J."/>
            <person name="Ellis B."/>
            <person name="Gendler K."/>
            <person name="Goodstein D."/>
            <person name="Gribskov M."/>
            <person name="Grimwood J."/>
            <person name="Groover A."/>
            <person name="Gunter L."/>
            <person name="Hamberger B."/>
            <person name="Heinze B."/>
            <person name="Helariutta Y."/>
            <person name="Henrissat B."/>
            <person name="Holligan D."/>
            <person name="Holt R."/>
            <person name="Huang W."/>
            <person name="Islam-Faridi N."/>
            <person name="Jones S."/>
            <person name="Jones-Rhoades M."/>
            <person name="Jorgensen R."/>
            <person name="Joshi C."/>
            <person name="Kangasjaervi J."/>
            <person name="Karlsson J."/>
            <person name="Kelleher C."/>
            <person name="Kirkpatrick R."/>
            <person name="Kirst M."/>
            <person name="Kohler A."/>
            <person name="Kalluri U."/>
            <person name="Larimer F."/>
            <person name="Leebens-Mack J."/>
            <person name="Leple J.-C."/>
            <person name="Locascio P."/>
            <person name="Lou Y."/>
            <person name="Lucas S."/>
            <person name="Martin F."/>
            <person name="Montanini B."/>
            <person name="Napoli C."/>
            <person name="Nelson D.R."/>
            <person name="Nelson C."/>
            <person name="Nieminen K."/>
            <person name="Nilsson O."/>
            <person name="Pereda V."/>
            <person name="Peter G."/>
            <person name="Philippe R."/>
            <person name="Pilate G."/>
            <person name="Poliakov A."/>
            <person name="Razumovskaya J."/>
            <person name="Richardson P."/>
            <person name="Rinaldi C."/>
            <person name="Ritland K."/>
            <person name="Rouze P."/>
            <person name="Ryaboy D."/>
            <person name="Schmutz J."/>
            <person name="Schrader J."/>
            <person name="Segerman B."/>
            <person name="Shin H."/>
            <person name="Siddiqui A."/>
            <person name="Sterky F."/>
            <person name="Terry A."/>
            <person name="Tsai C.-J."/>
            <person name="Uberbacher E."/>
            <person name="Unneberg P."/>
            <person name="Vahala J."/>
            <person name="Wall K."/>
            <person name="Wessler S."/>
            <person name="Yang G."/>
            <person name="Yin T."/>
            <person name="Douglas C."/>
            <person name="Marra M."/>
            <person name="Sandberg G."/>
            <person name="Van de Peer Y."/>
            <person name="Rokhsar D.S."/>
        </authorList>
    </citation>
    <scope>NUCLEOTIDE SEQUENCE [LARGE SCALE GENOMIC DNA]</scope>
    <source>
        <strain>cv. Nisqually</strain>
    </source>
</reference>
<name>NDHH_POPTR</name>
<geneLocation type="chloroplast"/>